<feature type="chain" id="PRO_1000060631" description="Integration host factor subunit beta">
    <location>
        <begin position="1"/>
        <end position="94"/>
    </location>
</feature>
<feature type="helix" evidence="2">
    <location>
        <begin position="5"/>
        <end position="11"/>
    </location>
</feature>
<feature type="helix" evidence="2">
    <location>
        <begin position="19"/>
        <end position="39"/>
    </location>
</feature>
<feature type="strand" evidence="2">
    <location>
        <begin position="43"/>
        <end position="45"/>
    </location>
</feature>
<feature type="turn" evidence="2">
    <location>
        <begin position="46"/>
        <end position="48"/>
    </location>
</feature>
<feature type="strand" evidence="2">
    <location>
        <begin position="49"/>
        <end position="56"/>
    </location>
</feature>
<feature type="strand" evidence="2">
    <location>
        <begin position="59"/>
        <end position="62"/>
    </location>
</feature>
<feature type="strand" evidence="2">
    <location>
        <begin position="64"/>
        <end position="66"/>
    </location>
</feature>
<feature type="strand" evidence="2">
    <location>
        <begin position="69"/>
        <end position="72"/>
    </location>
</feature>
<feature type="strand" evidence="2">
    <location>
        <begin position="75"/>
        <end position="82"/>
    </location>
</feature>
<feature type="helix" evidence="2">
    <location>
        <begin position="84"/>
        <end position="90"/>
    </location>
</feature>
<reference key="1">
    <citation type="journal article" date="2006" name="Genome Biol.">
        <title>Genomic analysis reveals that Pseudomonas aeruginosa virulence is combinatorial.</title>
        <authorList>
            <person name="Lee D.G."/>
            <person name="Urbach J.M."/>
            <person name="Wu G."/>
            <person name="Liberati N.T."/>
            <person name="Feinbaum R.L."/>
            <person name="Miyata S."/>
            <person name="Diggins L.T."/>
            <person name="He J."/>
            <person name="Saucier M."/>
            <person name="Deziel E."/>
            <person name="Friedman L."/>
            <person name="Li L."/>
            <person name="Grills G."/>
            <person name="Montgomery K."/>
            <person name="Kucherlapati R."/>
            <person name="Rahme L.G."/>
            <person name="Ausubel F.M."/>
        </authorList>
    </citation>
    <scope>NUCLEOTIDE SEQUENCE [LARGE SCALE GENOMIC DNA]</scope>
    <source>
        <strain>UCBPP-PA14</strain>
    </source>
</reference>
<keyword id="KW-0002">3D-structure</keyword>
<keyword id="KW-0233">DNA recombination</keyword>
<keyword id="KW-0238">DNA-binding</keyword>
<keyword id="KW-0804">Transcription</keyword>
<keyword id="KW-0805">Transcription regulation</keyword>
<keyword id="KW-0810">Translation regulation</keyword>
<organism>
    <name type="scientific">Pseudomonas aeruginosa (strain UCBPP-PA14)</name>
    <dbReference type="NCBI Taxonomy" id="208963"/>
    <lineage>
        <taxon>Bacteria</taxon>
        <taxon>Pseudomonadati</taxon>
        <taxon>Pseudomonadota</taxon>
        <taxon>Gammaproteobacteria</taxon>
        <taxon>Pseudomonadales</taxon>
        <taxon>Pseudomonadaceae</taxon>
        <taxon>Pseudomonas</taxon>
    </lineage>
</organism>
<gene>
    <name evidence="1" type="primary">ihfB</name>
    <name evidence="1" type="synonym">himD</name>
    <name type="ordered locus">PA14_23340</name>
</gene>
<dbReference type="EMBL" id="CP000438">
    <property type="protein sequence ID" value="ABJ12386.1"/>
    <property type="molecule type" value="Genomic_DNA"/>
</dbReference>
<dbReference type="RefSeq" id="WP_003091441.1">
    <property type="nucleotide sequence ID" value="NZ_CP034244.1"/>
</dbReference>
<dbReference type="PDB" id="8FLJ">
    <property type="method" value="EM"/>
    <property type="resolution" value="3.48 A"/>
    <property type="chains" value="F/H=1-94"/>
</dbReference>
<dbReference type="PDBsum" id="8FLJ"/>
<dbReference type="EMDB" id="EMD-29280"/>
<dbReference type="SMR" id="Q02PW7"/>
<dbReference type="GeneID" id="79914974"/>
<dbReference type="KEGG" id="pau:PA14_23340"/>
<dbReference type="PseudoCAP" id="PA14_23340"/>
<dbReference type="HOGENOM" id="CLU_105066_2_0_6"/>
<dbReference type="BioCyc" id="PAER208963:G1G74-1943-MONOMER"/>
<dbReference type="Proteomes" id="UP000000653">
    <property type="component" value="Chromosome"/>
</dbReference>
<dbReference type="GO" id="GO:0005694">
    <property type="term" value="C:chromosome"/>
    <property type="evidence" value="ECO:0007669"/>
    <property type="project" value="InterPro"/>
</dbReference>
<dbReference type="GO" id="GO:0005829">
    <property type="term" value="C:cytosol"/>
    <property type="evidence" value="ECO:0007669"/>
    <property type="project" value="TreeGrafter"/>
</dbReference>
<dbReference type="GO" id="GO:0003677">
    <property type="term" value="F:DNA binding"/>
    <property type="evidence" value="ECO:0007669"/>
    <property type="project" value="UniProtKB-UniRule"/>
</dbReference>
<dbReference type="GO" id="GO:0030527">
    <property type="term" value="F:structural constituent of chromatin"/>
    <property type="evidence" value="ECO:0007669"/>
    <property type="project" value="InterPro"/>
</dbReference>
<dbReference type="GO" id="GO:0006310">
    <property type="term" value="P:DNA recombination"/>
    <property type="evidence" value="ECO:0007669"/>
    <property type="project" value="UniProtKB-UniRule"/>
</dbReference>
<dbReference type="GO" id="GO:0006355">
    <property type="term" value="P:regulation of DNA-templated transcription"/>
    <property type="evidence" value="ECO:0007669"/>
    <property type="project" value="UniProtKB-UniRule"/>
</dbReference>
<dbReference type="GO" id="GO:0006417">
    <property type="term" value="P:regulation of translation"/>
    <property type="evidence" value="ECO:0007669"/>
    <property type="project" value="UniProtKB-UniRule"/>
</dbReference>
<dbReference type="CDD" id="cd13836">
    <property type="entry name" value="IHF_B"/>
    <property type="match status" value="1"/>
</dbReference>
<dbReference type="FunFam" id="4.10.520.10:FF:000003">
    <property type="entry name" value="Integration host factor subunit beta"/>
    <property type="match status" value="1"/>
</dbReference>
<dbReference type="Gene3D" id="4.10.520.10">
    <property type="entry name" value="IHF-like DNA-binding proteins"/>
    <property type="match status" value="1"/>
</dbReference>
<dbReference type="HAMAP" id="MF_00381">
    <property type="entry name" value="IHF_beta"/>
    <property type="match status" value="1"/>
</dbReference>
<dbReference type="InterPro" id="IPR000119">
    <property type="entry name" value="Hist_DNA-bd"/>
</dbReference>
<dbReference type="InterPro" id="IPR020816">
    <property type="entry name" value="Histone-like_DNA-bd_CS"/>
</dbReference>
<dbReference type="InterPro" id="IPR010992">
    <property type="entry name" value="IHF-like_DNA-bd_dom_sf"/>
</dbReference>
<dbReference type="InterPro" id="IPR005685">
    <property type="entry name" value="IHF_beta"/>
</dbReference>
<dbReference type="NCBIfam" id="TIGR00988">
    <property type="entry name" value="hip"/>
    <property type="match status" value="1"/>
</dbReference>
<dbReference type="NCBIfam" id="NF001222">
    <property type="entry name" value="PRK00199.1"/>
    <property type="match status" value="1"/>
</dbReference>
<dbReference type="PANTHER" id="PTHR33175">
    <property type="entry name" value="DNA-BINDING PROTEIN HU"/>
    <property type="match status" value="1"/>
</dbReference>
<dbReference type="PANTHER" id="PTHR33175:SF5">
    <property type="entry name" value="INTEGRATION HOST FACTOR SUBUNIT BETA"/>
    <property type="match status" value="1"/>
</dbReference>
<dbReference type="Pfam" id="PF00216">
    <property type="entry name" value="Bac_DNA_binding"/>
    <property type="match status" value="1"/>
</dbReference>
<dbReference type="PRINTS" id="PR01727">
    <property type="entry name" value="DNABINDINGHU"/>
</dbReference>
<dbReference type="SMART" id="SM00411">
    <property type="entry name" value="BHL"/>
    <property type="match status" value="1"/>
</dbReference>
<dbReference type="SUPFAM" id="SSF47729">
    <property type="entry name" value="IHF-like DNA-binding proteins"/>
    <property type="match status" value="1"/>
</dbReference>
<dbReference type="PROSITE" id="PS00045">
    <property type="entry name" value="HISTONE_LIKE"/>
    <property type="match status" value="1"/>
</dbReference>
<name>IHFB_PSEAB</name>
<accession>Q02PW7</accession>
<comment type="function">
    <text evidence="1">This protein is one of the two subunits of integration host factor, a specific DNA-binding protein that functions in genetic recombination as well as in transcriptional and translational control.</text>
</comment>
<comment type="subunit">
    <text evidence="1">Heterodimer of an alpha and a beta chain.</text>
</comment>
<comment type="similarity">
    <text evidence="1">Belongs to the bacterial histone-like protein family.</text>
</comment>
<evidence type="ECO:0000255" key="1">
    <source>
        <dbReference type="HAMAP-Rule" id="MF_00381"/>
    </source>
</evidence>
<evidence type="ECO:0007829" key="2">
    <source>
        <dbReference type="PDB" id="8FLJ"/>
    </source>
</evidence>
<sequence length="94" mass="10632">MTKSELIERIVTHQGQLSAKDVELAIKTMLEQMSQALATGDRIEIRGFGSFSLHYRAPRVGRNPKTGESVRLDGKFVPHFKPGKELRDRVNEPE</sequence>
<protein>
    <recommendedName>
        <fullName evidence="1">Integration host factor subunit beta</fullName>
        <shortName evidence="1">IHF-beta</shortName>
    </recommendedName>
</protein>
<proteinExistence type="evidence at protein level"/>